<keyword id="KW-0963">Cytoplasm</keyword>
<keyword id="KW-0255">Endonuclease</keyword>
<keyword id="KW-0378">Hydrolase</keyword>
<keyword id="KW-0460">Magnesium</keyword>
<keyword id="KW-0479">Metal-binding</keyword>
<keyword id="KW-0507">mRNA processing</keyword>
<keyword id="KW-0540">Nuclease</keyword>
<keyword id="KW-0694">RNA-binding</keyword>
<keyword id="KW-0698">rRNA processing</keyword>
<keyword id="KW-0699">rRNA-binding</keyword>
<keyword id="KW-0819">tRNA processing</keyword>
<comment type="function">
    <text evidence="1">Digests double-stranded RNA. Involved in the processing of primary rRNA transcript to yield the immediate precursors to the large and small rRNAs (23S and 16S). Processes some mRNAs, and tRNAs when they are encoded in the rRNA operon. Processes pre-crRNA and tracrRNA of type II CRISPR loci if present in the organism.</text>
</comment>
<comment type="catalytic activity">
    <reaction evidence="1">
        <text>Endonucleolytic cleavage to 5'-phosphomonoester.</text>
        <dbReference type="EC" id="3.1.26.3"/>
    </reaction>
</comment>
<comment type="cofactor">
    <cofactor evidence="1">
        <name>Mg(2+)</name>
        <dbReference type="ChEBI" id="CHEBI:18420"/>
    </cofactor>
</comment>
<comment type="subunit">
    <text evidence="1">Homodimer.</text>
</comment>
<comment type="subcellular location">
    <subcellularLocation>
        <location evidence="1">Cytoplasm</location>
    </subcellularLocation>
</comment>
<comment type="similarity">
    <text evidence="1">Belongs to the ribonuclease III family.</text>
</comment>
<reference key="1">
    <citation type="submission" date="2007-06" db="EMBL/GenBank/DDBJ databases">
        <title>Complete sequence of Sinorhizobium medicae WSM419 chromosome.</title>
        <authorList>
            <consortium name="US DOE Joint Genome Institute"/>
            <person name="Copeland A."/>
            <person name="Lucas S."/>
            <person name="Lapidus A."/>
            <person name="Barry K."/>
            <person name="Glavina del Rio T."/>
            <person name="Dalin E."/>
            <person name="Tice H."/>
            <person name="Pitluck S."/>
            <person name="Chain P."/>
            <person name="Malfatti S."/>
            <person name="Shin M."/>
            <person name="Vergez L."/>
            <person name="Schmutz J."/>
            <person name="Larimer F."/>
            <person name="Land M."/>
            <person name="Hauser L."/>
            <person name="Kyrpides N."/>
            <person name="Mikhailova N."/>
            <person name="Reeve W.G."/>
            <person name="Richardson P."/>
        </authorList>
    </citation>
    <scope>NUCLEOTIDE SEQUENCE [LARGE SCALE GENOMIC DNA]</scope>
    <source>
        <strain>WSM419</strain>
    </source>
</reference>
<protein>
    <recommendedName>
        <fullName evidence="1">Ribonuclease 3</fullName>
        <ecNumber evidence="1">3.1.26.3</ecNumber>
    </recommendedName>
    <alternativeName>
        <fullName evidence="1">Ribonuclease III</fullName>
        <shortName evidence="1">RNase III</shortName>
    </alternativeName>
</protein>
<name>RNC_SINMW</name>
<gene>
    <name evidence="1" type="primary">rnc</name>
    <name type="ordered locus">Smed_0682</name>
</gene>
<evidence type="ECO:0000255" key="1">
    <source>
        <dbReference type="HAMAP-Rule" id="MF_00104"/>
    </source>
</evidence>
<evidence type="ECO:0000256" key="2">
    <source>
        <dbReference type="SAM" id="MobiDB-lite"/>
    </source>
</evidence>
<organism>
    <name type="scientific">Sinorhizobium medicae (strain WSM419)</name>
    <name type="common">Ensifer medicae</name>
    <dbReference type="NCBI Taxonomy" id="366394"/>
    <lineage>
        <taxon>Bacteria</taxon>
        <taxon>Pseudomonadati</taxon>
        <taxon>Pseudomonadota</taxon>
        <taxon>Alphaproteobacteria</taxon>
        <taxon>Hyphomicrobiales</taxon>
        <taxon>Rhizobiaceae</taxon>
        <taxon>Sinorhizobium/Ensifer group</taxon>
        <taxon>Sinorhizobium</taxon>
    </lineage>
</organism>
<dbReference type="EC" id="3.1.26.3" evidence="1"/>
<dbReference type="EMBL" id="CP000738">
    <property type="protein sequence ID" value="ABR59538.1"/>
    <property type="molecule type" value="Genomic_DNA"/>
</dbReference>
<dbReference type="RefSeq" id="WP_011974884.1">
    <property type="nucleotide sequence ID" value="NC_009636.1"/>
</dbReference>
<dbReference type="RefSeq" id="YP_001326373.1">
    <property type="nucleotide sequence ID" value="NC_009636.1"/>
</dbReference>
<dbReference type="SMR" id="A6U7A8"/>
<dbReference type="STRING" id="366394.Smed_0682"/>
<dbReference type="GeneID" id="61609958"/>
<dbReference type="KEGG" id="smd:Smed_0682"/>
<dbReference type="PATRIC" id="fig|366394.8.peg.3784"/>
<dbReference type="eggNOG" id="COG0571">
    <property type="taxonomic scope" value="Bacteria"/>
</dbReference>
<dbReference type="HOGENOM" id="CLU_000907_1_1_5"/>
<dbReference type="OrthoDB" id="9805026at2"/>
<dbReference type="Proteomes" id="UP000001108">
    <property type="component" value="Chromosome"/>
</dbReference>
<dbReference type="GO" id="GO:0005737">
    <property type="term" value="C:cytoplasm"/>
    <property type="evidence" value="ECO:0007669"/>
    <property type="project" value="UniProtKB-SubCell"/>
</dbReference>
<dbReference type="GO" id="GO:0003725">
    <property type="term" value="F:double-stranded RNA binding"/>
    <property type="evidence" value="ECO:0007669"/>
    <property type="project" value="TreeGrafter"/>
</dbReference>
<dbReference type="GO" id="GO:0046872">
    <property type="term" value="F:metal ion binding"/>
    <property type="evidence" value="ECO:0007669"/>
    <property type="project" value="UniProtKB-KW"/>
</dbReference>
<dbReference type="GO" id="GO:0004525">
    <property type="term" value="F:ribonuclease III activity"/>
    <property type="evidence" value="ECO:0007669"/>
    <property type="project" value="UniProtKB-UniRule"/>
</dbReference>
<dbReference type="GO" id="GO:0019843">
    <property type="term" value="F:rRNA binding"/>
    <property type="evidence" value="ECO:0007669"/>
    <property type="project" value="UniProtKB-KW"/>
</dbReference>
<dbReference type="GO" id="GO:0006397">
    <property type="term" value="P:mRNA processing"/>
    <property type="evidence" value="ECO:0007669"/>
    <property type="project" value="UniProtKB-UniRule"/>
</dbReference>
<dbReference type="GO" id="GO:0010468">
    <property type="term" value="P:regulation of gene expression"/>
    <property type="evidence" value="ECO:0007669"/>
    <property type="project" value="TreeGrafter"/>
</dbReference>
<dbReference type="GO" id="GO:0006364">
    <property type="term" value="P:rRNA processing"/>
    <property type="evidence" value="ECO:0007669"/>
    <property type="project" value="UniProtKB-UniRule"/>
</dbReference>
<dbReference type="GO" id="GO:0008033">
    <property type="term" value="P:tRNA processing"/>
    <property type="evidence" value="ECO:0007669"/>
    <property type="project" value="UniProtKB-KW"/>
</dbReference>
<dbReference type="CDD" id="cd10845">
    <property type="entry name" value="DSRM_RNAse_III_family"/>
    <property type="match status" value="1"/>
</dbReference>
<dbReference type="CDD" id="cd00593">
    <property type="entry name" value="RIBOc"/>
    <property type="match status" value="1"/>
</dbReference>
<dbReference type="FunFam" id="1.10.1520.10:FF:000001">
    <property type="entry name" value="Ribonuclease 3"/>
    <property type="match status" value="1"/>
</dbReference>
<dbReference type="Gene3D" id="3.30.160.20">
    <property type="match status" value="1"/>
</dbReference>
<dbReference type="Gene3D" id="1.10.1520.10">
    <property type="entry name" value="Ribonuclease III domain"/>
    <property type="match status" value="1"/>
</dbReference>
<dbReference type="HAMAP" id="MF_00104">
    <property type="entry name" value="RNase_III"/>
    <property type="match status" value="1"/>
</dbReference>
<dbReference type="InterPro" id="IPR014720">
    <property type="entry name" value="dsRBD_dom"/>
</dbReference>
<dbReference type="InterPro" id="IPR011907">
    <property type="entry name" value="RNase_III"/>
</dbReference>
<dbReference type="InterPro" id="IPR000999">
    <property type="entry name" value="RNase_III_dom"/>
</dbReference>
<dbReference type="InterPro" id="IPR036389">
    <property type="entry name" value="RNase_III_sf"/>
</dbReference>
<dbReference type="NCBIfam" id="TIGR02191">
    <property type="entry name" value="RNaseIII"/>
    <property type="match status" value="1"/>
</dbReference>
<dbReference type="PANTHER" id="PTHR11207:SF0">
    <property type="entry name" value="RIBONUCLEASE 3"/>
    <property type="match status" value="1"/>
</dbReference>
<dbReference type="PANTHER" id="PTHR11207">
    <property type="entry name" value="RIBONUCLEASE III"/>
    <property type="match status" value="1"/>
</dbReference>
<dbReference type="Pfam" id="PF00035">
    <property type="entry name" value="dsrm"/>
    <property type="match status" value="1"/>
</dbReference>
<dbReference type="Pfam" id="PF14622">
    <property type="entry name" value="Ribonucleas_3_3"/>
    <property type="match status" value="1"/>
</dbReference>
<dbReference type="SMART" id="SM00358">
    <property type="entry name" value="DSRM"/>
    <property type="match status" value="1"/>
</dbReference>
<dbReference type="SMART" id="SM00535">
    <property type="entry name" value="RIBOc"/>
    <property type="match status" value="1"/>
</dbReference>
<dbReference type="SUPFAM" id="SSF54768">
    <property type="entry name" value="dsRNA-binding domain-like"/>
    <property type="match status" value="1"/>
</dbReference>
<dbReference type="SUPFAM" id="SSF69065">
    <property type="entry name" value="RNase III domain-like"/>
    <property type="match status" value="1"/>
</dbReference>
<dbReference type="PROSITE" id="PS50137">
    <property type="entry name" value="DS_RBD"/>
    <property type="match status" value="1"/>
</dbReference>
<dbReference type="PROSITE" id="PS00517">
    <property type="entry name" value="RNASE_3_1"/>
    <property type="match status" value="1"/>
</dbReference>
<dbReference type="PROSITE" id="PS50142">
    <property type="entry name" value="RNASE_3_2"/>
    <property type="match status" value="1"/>
</dbReference>
<proteinExistence type="inferred from homology"/>
<feature type="chain" id="PRO_1000075823" description="Ribonuclease 3">
    <location>
        <begin position="1"/>
        <end position="238"/>
    </location>
</feature>
<feature type="domain" description="RNase III" evidence="1">
    <location>
        <begin position="11"/>
        <end position="136"/>
    </location>
</feature>
<feature type="domain" description="DRBM" evidence="1">
    <location>
        <begin position="161"/>
        <end position="230"/>
    </location>
</feature>
<feature type="region of interest" description="Disordered" evidence="2">
    <location>
        <begin position="180"/>
        <end position="215"/>
    </location>
</feature>
<feature type="compositionally biased region" description="Basic and acidic residues" evidence="2">
    <location>
        <begin position="180"/>
        <end position="193"/>
    </location>
</feature>
<feature type="active site" evidence="1">
    <location>
        <position position="53"/>
    </location>
</feature>
<feature type="active site" evidence="1">
    <location>
        <position position="125"/>
    </location>
</feature>
<feature type="binding site" evidence="1">
    <location>
        <position position="49"/>
    </location>
    <ligand>
        <name>Mg(2+)</name>
        <dbReference type="ChEBI" id="CHEBI:18420"/>
    </ligand>
</feature>
<feature type="binding site" evidence="1">
    <location>
        <position position="122"/>
    </location>
    <ligand>
        <name>Mg(2+)</name>
        <dbReference type="ChEBI" id="CHEBI:18420"/>
    </ligand>
</feature>
<feature type="binding site" evidence="1">
    <location>
        <position position="125"/>
    </location>
    <ligand>
        <name>Mg(2+)</name>
        <dbReference type="ChEBI" id="CHEBI:18420"/>
    </ligand>
</feature>
<sequence>MKGRSLNAEDRARLEAAIGYQFAEKERLDRALTHSSARSGRAINYQRLEFLGDRILGLCVAELLFQTFSDANEGELSVRLNQLVSAESCAKVADELSLHEFIRTGSDVKKITGKHMMNVRADVVESLIAAIYLDGGLEAARRFVLEHWTHRAASADGARRDAKTELQEWAHARFGVAPKYRTEDRSGPDHDPRFTVTVEVDGIDPETGVDRSKRGAEQVAAMKLLEREGVWQKRSAGN</sequence>
<accession>A6U7A8</accession>